<name>GRK1_RAT</name>
<gene>
    <name evidence="12" type="primary">Grk1</name>
    <name type="synonym">Rhok</name>
</gene>
<feature type="chain" id="PRO_0000024379" description="Rhodopsin kinase GRK1">
    <location>
        <begin position="1"/>
        <end position="561"/>
    </location>
</feature>
<feature type="propeptide" id="PRO_0000024380" description="Removed in mature form" evidence="1">
    <location>
        <begin position="562"/>
        <end position="564"/>
    </location>
</feature>
<feature type="domain" description="RGS" evidence="5">
    <location>
        <begin position="58"/>
        <end position="175"/>
    </location>
</feature>
<feature type="domain" description="Protein kinase" evidence="4">
    <location>
        <begin position="190"/>
        <end position="455"/>
    </location>
</feature>
<feature type="domain" description="AGC-kinase C-terminal" evidence="6">
    <location>
        <begin position="456"/>
        <end position="521"/>
    </location>
</feature>
<feature type="region of interest" description="N-terminal">
    <location>
        <begin position="1"/>
        <end position="189"/>
    </location>
</feature>
<feature type="region of interest" description="Interaction with RCVRN" evidence="2">
    <location>
        <begin position="1"/>
        <end position="15"/>
    </location>
</feature>
<feature type="region of interest" description="C-terminal">
    <location>
        <begin position="456"/>
        <end position="564"/>
    </location>
</feature>
<feature type="active site" description="Proton acceptor" evidence="4 7">
    <location>
        <position position="317"/>
    </location>
</feature>
<feature type="binding site" evidence="4">
    <location>
        <begin position="196"/>
        <end position="204"/>
    </location>
    <ligand>
        <name>ATP</name>
        <dbReference type="ChEBI" id="CHEBI:30616"/>
    </ligand>
</feature>
<feature type="binding site" evidence="4">
    <location>
        <position position="219"/>
    </location>
    <ligand>
        <name>ATP</name>
        <dbReference type="ChEBI" id="CHEBI:30616"/>
    </ligand>
</feature>
<feature type="modified residue" description="Phosphoserine" evidence="2">
    <location>
        <position position="5"/>
    </location>
</feature>
<feature type="modified residue" description="Phosphothreonine" evidence="2">
    <location>
        <position position="8"/>
    </location>
</feature>
<feature type="modified residue" description="Phosphoserine; by PKA and autocatalysis" evidence="11">
    <location>
        <position position="21"/>
    </location>
</feature>
<feature type="modified residue" description="Phosphoserine; by autocatalysis" evidence="2">
    <location>
        <position position="491"/>
    </location>
</feature>
<feature type="modified residue" description="Phosphothreonine; by autocatalysis" evidence="2">
    <location>
        <position position="492"/>
    </location>
</feature>
<feature type="modified residue" description="Cysteine methyl ester" evidence="2">
    <location>
        <position position="561"/>
    </location>
</feature>
<feature type="lipid moiety-binding region" description="S-farnesyl cysteine" evidence="2">
    <location>
        <position position="561"/>
    </location>
</feature>
<proteinExistence type="evidence at protein level"/>
<dbReference type="EC" id="2.7.11.14" evidence="3"/>
<dbReference type="EMBL" id="U63971">
    <property type="protein sequence ID" value="AAB05930.1"/>
    <property type="molecule type" value="mRNA"/>
</dbReference>
<dbReference type="RefSeq" id="NP_112358.1">
    <property type="nucleotide sequence ID" value="NM_031096.1"/>
</dbReference>
<dbReference type="SMR" id="Q63651"/>
<dbReference type="FunCoup" id="Q63651">
    <property type="interactions" value="230"/>
</dbReference>
<dbReference type="STRING" id="10116.ENSRNOP00000024999"/>
<dbReference type="GlyGen" id="Q63651">
    <property type="glycosylation" value="2 sites"/>
</dbReference>
<dbReference type="iPTMnet" id="Q63651"/>
<dbReference type="PhosphoSitePlus" id="Q63651"/>
<dbReference type="PaxDb" id="10116-ENSRNOP00000024999"/>
<dbReference type="GeneID" id="81760"/>
<dbReference type="KEGG" id="rno:81760"/>
<dbReference type="UCSC" id="RGD:619712">
    <property type="organism name" value="rat"/>
</dbReference>
<dbReference type="AGR" id="RGD:619712"/>
<dbReference type="CTD" id="6011"/>
<dbReference type="RGD" id="619712">
    <property type="gene designation" value="Grk1"/>
</dbReference>
<dbReference type="eggNOG" id="KOG0986">
    <property type="taxonomic scope" value="Eukaryota"/>
</dbReference>
<dbReference type="InParanoid" id="Q63651"/>
<dbReference type="OrthoDB" id="19232at9989"/>
<dbReference type="PhylomeDB" id="Q63651"/>
<dbReference type="BRENDA" id="2.7.11.14">
    <property type="organism ID" value="5301"/>
</dbReference>
<dbReference type="Reactome" id="R-RNO-2514859">
    <property type="pathway name" value="Inactivation, recovery and regulation of the phototransduction cascade"/>
</dbReference>
<dbReference type="PRO" id="PR:Q63651"/>
<dbReference type="Proteomes" id="UP000002494">
    <property type="component" value="Unplaced"/>
</dbReference>
<dbReference type="GO" id="GO:0005737">
    <property type="term" value="C:cytoplasm"/>
    <property type="evidence" value="ECO:0000266"/>
    <property type="project" value="RGD"/>
</dbReference>
<dbReference type="GO" id="GO:0016020">
    <property type="term" value="C:membrane"/>
    <property type="evidence" value="ECO:0007669"/>
    <property type="project" value="UniProtKB-SubCell"/>
</dbReference>
<dbReference type="GO" id="GO:0001750">
    <property type="term" value="C:photoreceptor outer segment"/>
    <property type="evidence" value="ECO:0000266"/>
    <property type="project" value="RGD"/>
</dbReference>
<dbReference type="GO" id="GO:0005524">
    <property type="term" value="F:ATP binding"/>
    <property type="evidence" value="ECO:0007669"/>
    <property type="project" value="UniProtKB-KW"/>
</dbReference>
<dbReference type="GO" id="GO:0050254">
    <property type="term" value="F:rhodopsin kinase activity"/>
    <property type="evidence" value="ECO:0000314"/>
    <property type="project" value="RGD"/>
</dbReference>
<dbReference type="GO" id="GO:0006915">
    <property type="term" value="P:apoptotic process"/>
    <property type="evidence" value="ECO:0000266"/>
    <property type="project" value="RGD"/>
</dbReference>
<dbReference type="GO" id="GO:0016056">
    <property type="term" value="P:G protein-coupled opsin signaling pathway"/>
    <property type="evidence" value="ECO:0000304"/>
    <property type="project" value="RGD"/>
</dbReference>
<dbReference type="GO" id="GO:0043524">
    <property type="term" value="P:negative regulation of neuron apoptotic process"/>
    <property type="evidence" value="ECO:0000266"/>
    <property type="project" value="RGD"/>
</dbReference>
<dbReference type="GO" id="GO:0008594">
    <property type="term" value="P:photoreceptor cell morphogenesis"/>
    <property type="evidence" value="ECO:0000266"/>
    <property type="project" value="RGD"/>
</dbReference>
<dbReference type="GO" id="GO:0042327">
    <property type="term" value="P:positive regulation of phosphorylation"/>
    <property type="evidence" value="ECO:0000266"/>
    <property type="project" value="RGD"/>
</dbReference>
<dbReference type="GO" id="GO:0060060">
    <property type="term" value="P:post-embryonic retina morphogenesis in camera-type eye"/>
    <property type="evidence" value="ECO:0000266"/>
    <property type="project" value="RGD"/>
</dbReference>
<dbReference type="GO" id="GO:0022400">
    <property type="term" value="P:regulation of opsin-mediated signaling pathway"/>
    <property type="evidence" value="ECO:0000250"/>
    <property type="project" value="UniProtKB"/>
</dbReference>
<dbReference type="GO" id="GO:0009966">
    <property type="term" value="P:regulation of signal transduction"/>
    <property type="evidence" value="ECO:0000318"/>
    <property type="project" value="GO_Central"/>
</dbReference>
<dbReference type="GO" id="GO:0009416">
    <property type="term" value="P:response to light stimulus"/>
    <property type="evidence" value="ECO:0000270"/>
    <property type="project" value="RGD"/>
</dbReference>
<dbReference type="GO" id="GO:0009410">
    <property type="term" value="P:response to xenobiotic stimulus"/>
    <property type="evidence" value="ECO:0000270"/>
    <property type="project" value="RGD"/>
</dbReference>
<dbReference type="GO" id="GO:0097473">
    <property type="term" value="P:retinal rod cell apoptotic process"/>
    <property type="evidence" value="ECO:0000266"/>
    <property type="project" value="RGD"/>
</dbReference>
<dbReference type="GO" id="GO:0007601">
    <property type="term" value="P:visual perception"/>
    <property type="evidence" value="ECO:0007669"/>
    <property type="project" value="UniProtKB-KW"/>
</dbReference>
<dbReference type="CDD" id="cd05608">
    <property type="entry name" value="STKc_GRK1"/>
    <property type="match status" value="1"/>
</dbReference>
<dbReference type="FunFam" id="1.10.167.10:FF:000028">
    <property type="entry name" value="G protein-coupled receptor kinase"/>
    <property type="match status" value="1"/>
</dbReference>
<dbReference type="FunFam" id="1.10.510.10:FF:000074">
    <property type="entry name" value="G protein-coupled receptor kinase"/>
    <property type="match status" value="1"/>
</dbReference>
<dbReference type="Gene3D" id="3.30.200.20">
    <property type="entry name" value="Phosphorylase Kinase, domain 1"/>
    <property type="match status" value="1"/>
</dbReference>
<dbReference type="Gene3D" id="1.10.167.10">
    <property type="entry name" value="Regulator of G-protein Signalling 4, domain 2"/>
    <property type="match status" value="1"/>
</dbReference>
<dbReference type="Gene3D" id="1.10.510.10">
    <property type="entry name" value="Transferase(Phosphotransferase) domain 1"/>
    <property type="match status" value="1"/>
</dbReference>
<dbReference type="InterPro" id="IPR000961">
    <property type="entry name" value="AGC-kinase_C"/>
</dbReference>
<dbReference type="InterPro" id="IPR000239">
    <property type="entry name" value="GPCR_kinase"/>
</dbReference>
<dbReference type="InterPro" id="IPR037716">
    <property type="entry name" value="GRK1_dom"/>
</dbReference>
<dbReference type="InterPro" id="IPR011009">
    <property type="entry name" value="Kinase-like_dom_sf"/>
</dbReference>
<dbReference type="InterPro" id="IPR000719">
    <property type="entry name" value="Prot_kinase_dom"/>
</dbReference>
<dbReference type="InterPro" id="IPR017441">
    <property type="entry name" value="Protein_kinase_ATP_BS"/>
</dbReference>
<dbReference type="InterPro" id="IPR016137">
    <property type="entry name" value="RGS"/>
</dbReference>
<dbReference type="InterPro" id="IPR036305">
    <property type="entry name" value="RGS_sf"/>
</dbReference>
<dbReference type="InterPro" id="IPR044926">
    <property type="entry name" value="RGS_subdomain_2"/>
</dbReference>
<dbReference type="InterPro" id="IPR008271">
    <property type="entry name" value="Ser/Thr_kinase_AS"/>
</dbReference>
<dbReference type="PANTHER" id="PTHR24355">
    <property type="entry name" value="G PROTEIN-COUPLED RECEPTOR KINASE/RIBOSOMAL PROTEIN S6 KINASE"/>
    <property type="match status" value="1"/>
</dbReference>
<dbReference type="PANTHER" id="PTHR24355:SF11">
    <property type="entry name" value="RHODOPSIN KINASE GRK1"/>
    <property type="match status" value="1"/>
</dbReference>
<dbReference type="Pfam" id="PF00069">
    <property type="entry name" value="Pkinase"/>
    <property type="match status" value="1"/>
</dbReference>
<dbReference type="Pfam" id="PF00615">
    <property type="entry name" value="RGS"/>
    <property type="match status" value="1"/>
</dbReference>
<dbReference type="PRINTS" id="PR00717">
    <property type="entry name" value="GPCRKINASE"/>
</dbReference>
<dbReference type="SMART" id="SM00315">
    <property type="entry name" value="RGS"/>
    <property type="match status" value="1"/>
</dbReference>
<dbReference type="SMART" id="SM00133">
    <property type="entry name" value="S_TK_X"/>
    <property type="match status" value="1"/>
</dbReference>
<dbReference type="SMART" id="SM00220">
    <property type="entry name" value="S_TKc"/>
    <property type="match status" value="1"/>
</dbReference>
<dbReference type="SUPFAM" id="SSF56112">
    <property type="entry name" value="Protein kinase-like (PK-like)"/>
    <property type="match status" value="1"/>
</dbReference>
<dbReference type="SUPFAM" id="SSF48097">
    <property type="entry name" value="Regulator of G-protein signaling, RGS"/>
    <property type="match status" value="1"/>
</dbReference>
<dbReference type="PROSITE" id="PS51285">
    <property type="entry name" value="AGC_KINASE_CTER"/>
    <property type="match status" value="1"/>
</dbReference>
<dbReference type="PROSITE" id="PS00107">
    <property type="entry name" value="PROTEIN_KINASE_ATP"/>
    <property type="match status" value="1"/>
</dbReference>
<dbReference type="PROSITE" id="PS50011">
    <property type="entry name" value="PROTEIN_KINASE_DOM"/>
    <property type="match status" value="1"/>
</dbReference>
<dbReference type="PROSITE" id="PS00108">
    <property type="entry name" value="PROTEIN_KINASE_ST"/>
    <property type="match status" value="1"/>
</dbReference>
<dbReference type="PROSITE" id="PS50132">
    <property type="entry name" value="RGS"/>
    <property type="match status" value="1"/>
</dbReference>
<reference key="1">
    <citation type="journal article" date="1997" name="Vis. Neurosci.">
        <title>Molecular cloning and localization of rhodopsin kinase in the mammalian pineal.</title>
        <authorList>
            <person name="Zhao X."/>
            <person name="Haeseleer F."/>
            <person name="Fariss R.N."/>
            <person name="Huang J."/>
            <person name="Baehr W."/>
            <person name="Milam A.H."/>
            <person name="Palczewski K."/>
        </authorList>
    </citation>
    <scope>NUCLEOTIDE SEQUENCE [MRNA]</scope>
    <source>
        <strain>Sprague-Dawley</strain>
        <tissue>Retina</tissue>
    </source>
</reference>
<reference key="2">
    <citation type="journal article" date="2001" name="J. Neurosci.">
        <title>Species-specific differences in expression of G-protein-coupled receptor kinase (GRK) 7 and GRK1 in mammalian cone photoreceptor cells: implications for cone cell phototransduction.</title>
        <authorList>
            <person name="Weiss E.R."/>
            <person name="Ducceschi M.H."/>
            <person name="Horner T.J."/>
            <person name="Li A."/>
            <person name="Craft C.M."/>
            <person name="Osawa S."/>
        </authorList>
    </citation>
    <scope>TISSUE SPECIFICITY</scope>
</reference>
<reference key="3">
    <citation type="journal article" date="2011" name="J. Biol. Chem.">
        <title>Phosphorylation of G protein-coupled receptor kinase 1 (GRK1) is regulated by light but independent of phototransduction in rod photoreceptors.</title>
        <authorList>
            <person name="Osawa S."/>
            <person name="Jo R."/>
            <person name="Xiong Y."/>
            <person name="Reidel B."/>
            <person name="Tserentsoodol N."/>
            <person name="Arshavsky V.Y."/>
            <person name="Iuvone P.M."/>
            <person name="Weiss E.R."/>
        </authorList>
    </citation>
    <scope>PROTEIN SEQUENCE OF 20-31</scope>
    <scope>IDENTIFICATION BY MASS SPECTROMETRY</scope>
    <scope>PHOSPHORYLATION AT SER-21</scope>
    <scope>TISSUE SPECIFICITY</scope>
</reference>
<organism>
    <name type="scientific">Rattus norvegicus</name>
    <name type="common">Rat</name>
    <dbReference type="NCBI Taxonomy" id="10116"/>
    <lineage>
        <taxon>Eukaryota</taxon>
        <taxon>Metazoa</taxon>
        <taxon>Chordata</taxon>
        <taxon>Craniata</taxon>
        <taxon>Vertebrata</taxon>
        <taxon>Euteleostomi</taxon>
        <taxon>Mammalia</taxon>
        <taxon>Eutheria</taxon>
        <taxon>Euarchontoglires</taxon>
        <taxon>Glires</taxon>
        <taxon>Rodentia</taxon>
        <taxon>Myomorpha</taxon>
        <taxon>Muroidea</taxon>
        <taxon>Muridae</taxon>
        <taxon>Murinae</taxon>
        <taxon>Rattus</taxon>
    </lineage>
</organism>
<sequence>MDFGSLETVVANSAFIAARGSFDGSSTPSSRDKKYLAKLRLPPLSKCEGLRDSISLEFDNLCSEQPIGKRLFQQFLKTDERHVPALELWKDIEDYDTADDDLRPQKAQAILAEYLDPQGTLFCNFLDQGMVARVKEGPTGSQDGLFQPLLQATLEHLSQGPFQEYLGSLYFLRFLQWKWLEAQPIGEDWFLDFRVLGKGGFGEVSACQMKATGKMYACKKLNKKRLKKRKGYQGAIVEKRILAKVHSRFIVSLAYAFETKTDLCLVMTIMNGGDVRYHIYNVDEENPGFPEPRAIYYTAQIISGLEHLHQRRIVYRDLKPENVLLDNDGNIRISDLGLAVELKEGQNKTKGYAGTPGFMAPELLRGEEYDFSVDYFALGVTLYEMIAARGPFRARGEKVENKELKQRIISEPVKYPEKFSQASKDFCEQLLEKDPEKRLGFRDGTCDALRANVLFKDISWRQLEAGMLIPPFIPDSRTVYAKNIQDVGAFSTVKGVVFDKADTEFFQEFASGNCSIPWQEEMIETGFFGDLNVWRPDGQMPDDMKGITVEEAAPTAKSGMCLIS</sequence>
<comment type="function">
    <text evidence="3">Retina-specific kinase involved in the signal turnoff via phosphorylation of rhodopsin (RHO), the G protein- coupled receptor that initiates the phototransduction cascade (By similarity). This rapid desensitization is essential for scotopic vision and permits rapid adaptation to changes in illumination (By similarity). May play a role in the maintenance of the outer nuclear layer in the retina (By similarity).</text>
</comment>
<comment type="catalytic activity">
    <reaction evidence="3">
        <text>L-threonyl-[rhodopsin] + ATP = O-phospho-L-threonyl-[rhodopsin] + ADP + H(+)</text>
        <dbReference type="Rhea" id="RHEA:56552"/>
        <dbReference type="Rhea" id="RHEA-COMP:14596"/>
        <dbReference type="Rhea" id="RHEA-COMP:14597"/>
        <dbReference type="ChEBI" id="CHEBI:15378"/>
        <dbReference type="ChEBI" id="CHEBI:30013"/>
        <dbReference type="ChEBI" id="CHEBI:30616"/>
        <dbReference type="ChEBI" id="CHEBI:61977"/>
        <dbReference type="ChEBI" id="CHEBI:456216"/>
        <dbReference type="EC" id="2.7.11.14"/>
    </reaction>
</comment>
<comment type="catalytic activity">
    <reaction evidence="3">
        <text>L-seryl-[rhodopsin] + ATP = O-phospho-L-seryl-[rhodopsin] + ADP + H(+)</text>
        <dbReference type="Rhea" id="RHEA:23356"/>
        <dbReference type="Rhea" id="RHEA-COMP:14594"/>
        <dbReference type="Rhea" id="RHEA-COMP:14595"/>
        <dbReference type="ChEBI" id="CHEBI:15378"/>
        <dbReference type="ChEBI" id="CHEBI:29999"/>
        <dbReference type="ChEBI" id="CHEBI:30616"/>
        <dbReference type="ChEBI" id="CHEBI:83421"/>
        <dbReference type="ChEBI" id="CHEBI:456216"/>
        <dbReference type="EC" id="2.7.11.14"/>
    </reaction>
</comment>
<comment type="activity regulation">
    <text evidence="2">Inhibited by RCVRN, which prevents the interaction between GRK1 and RHO (By similarity). Inhibition is calcium-dependent (By similarity).</text>
</comment>
<comment type="subunit">
    <text evidence="2">Interacts (via N-terminus) with RCVRN (via C-terminus); the interaction is Ca(2+)-dependent (By similarity). Interacts (when prenylated) with PDE6D; this promotes release from membranes (By similarity). May form a complex composed of RHO, GRK1 and RCVRN in a Ca(2+)-dependent manner; RCVRN prevents the interaction between GRK1 and RHO (By similarity).</text>
</comment>
<comment type="subcellular location">
    <subcellularLocation>
        <location evidence="2">Membrane</location>
        <topology evidence="2">Lipid-anchor</topology>
    </subcellularLocation>
    <subcellularLocation>
        <location evidence="3">Cell projection</location>
        <location evidence="3">Cilium</location>
        <location evidence="3">Photoreceptor outer segment</location>
    </subcellularLocation>
    <text evidence="3">Subcellular location is not affected by light or dark conditions.</text>
</comment>
<comment type="tissue specificity">
    <text evidence="8 9">Detected in retina (at protein level) (PubMed:21504899). Retina-specific. Expressed in rod and cone photoreceptor cells.</text>
</comment>
<comment type="PTM">
    <text evidence="1 9">Autophosphorylated, Ser-21 is a minor site of autophosphorylation compared to Ser-491 and Thr-492 (By similarity). Phosphorylation at Ser-21 is regulated by light and activated by cAMP.</text>
</comment>
<comment type="PTM">
    <text evidence="2">Farnesylation is required for full activity.</text>
</comment>
<comment type="similarity">
    <text evidence="10">Belongs to the protein kinase superfamily. AGC Ser/Thr protein kinase family. GPRK subfamily.</text>
</comment>
<keyword id="KW-0067">ATP-binding</keyword>
<keyword id="KW-0966">Cell projection</keyword>
<keyword id="KW-0903">Direct protein sequencing</keyword>
<keyword id="KW-0418">Kinase</keyword>
<keyword id="KW-0449">Lipoprotein</keyword>
<keyword id="KW-0472">Membrane</keyword>
<keyword id="KW-0488">Methylation</keyword>
<keyword id="KW-0547">Nucleotide-binding</keyword>
<keyword id="KW-0597">Phosphoprotein</keyword>
<keyword id="KW-0636">Prenylation</keyword>
<keyword id="KW-1185">Reference proteome</keyword>
<keyword id="KW-0716">Sensory transduction</keyword>
<keyword id="KW-0723">Serine/threonine-protein kinase</keyword>
<keyword id="KW-0808">Transferase</keyword>
<keyword id="KW-0844">Vision</keyword>
<accession>Q63651</accession>
<protein>
    <recommendedName>
        <fullName>Rhodopsin kinase GRK1</fullName>
        <shortName>RK</shortName>
        <ecNumber evidence="3">2.7.11.14</ecNumber>
    </recommendedName>
    <alternativeName>
        <fullName evidence="12">G protein-coupled receptor kinase 1</fullName>
    </alternativeName>
</protein>
<evidence type="ECO:0000250" key="1"/>
<evidence type="ECO:0000250" key="2">
    <source>
        <dbReference type="UniProtKB" id="P28327"/>
    </source>
</evidence>
<evidence type="ECO:0000250" key="3">
    <source>
        <dbReference type="UniProtKB" id="Q9WVL4"/>
    </source>
</evidence>
<evidence type="ECO:0000255" key="4">
    <source>
        <dbReference type="PROSITE-ProRule" id="PRU00159"/>
    </source>
</evidence>
<evidence type="ECO:0000255" key="5">
    <source>
        <dbReference type="PROSITE-ProRule" id="PRU00171"/>
    </source>
</evidence>
<evidence type="ECO:0000255" key="6">
    <source>
        <dbReference type="PROSITE-ProRule" id="PRU00618"/>
    </source>
</evidence>
<evidence type="ECO:0000255" key="7">
    <source>
        <dbReference type="PROSITE-ProRule" id="PRU10027"/>
    </source>
</evidence>
<evidence type="ECO:0000269" key="8">
    <source>
    </source>
</evidence>
<evidence type="ECO:0000269" key="9">
    <source>
    </source>
</evidence>
<evidence type="ECO:0000305" key="10"/>
<evidence type="ECO:0000305" key="11">
    <source>
    </source>
</evidence>
<evidence type="ECO:0000312" key="12">
    <source>
        <dbReference type="RGD" id="619712"/>
    </source>
</evidence>